<dbReference type="EMBL" id="AAFI02000085">
    <property type="protein sequence ID" value="EAL64217.2"/>
    <property type="molecule type" value="Genomic_DNA"/>
</dbReference>
<dbReference type="RefSeq" id="XP_637720.2">
    <property type="nucleotide sequence ID" value="XM_632628.2"/>
</dbReference>
<dbReference type="SMR" id="Q54LW0"/>
<dbReference type="FunCoup" id="Q54LW0">
    <property type="interactions" value="4"/>
</dbReference>
<dbReference type="STRING" id="44689.Q54LW0"/>
<dbReference type="GlyGen" id="Q54LW0">
    <property type="glycosylation" value="1 site"/>
</dbReference>
<dbReference type="PaxDb" id="44689-DDB0266469"/>
<dbReference type="EnsemblProtists" id="EAL64217">
    <property type="protein sequence ID" value="EAL64217"/>
    <property type="gene ID" value="DDB_G0286385"/>
</dbReference>
<dbReference type="GeneID" id="8625585"/>
<dbReference type="KEGG" id="ddi:DDB_G0286385"/>
<dbReference type="dictyBase" id="DDB_G0286385">
    <property type="gene designation" value="padA"/>
</dbReference>
<dbReference type="VEuPathDB" id="AmoebaDB:DDB_G0286385"/>
<dbReference type="eggNOG" id="ENOG502S8P8">
    <property type="taxonomic scope" value="Eukaryota"/>
</dbReference>
<dbReference type="HOGENOM" id="CLU_007383_10_6_1"/>
<dbReference type="InParanoid" id="Q54LW0"/>
<dbReference type="OMA" id="LMCERFL"/>
<dbReference type="PhylomeDB" id="Q54LW0"/>
<dbReference type="PRO" id="PR:Q54LW0"/>
<dbReference type="Proteomes" id="UP000002195">
    <property type="component" value="Chromosome 4"/>
</dbReference>
<dbReference type="GO" id="GO:0051287">
    <property type="term" value="F:NAD binding"/>
    <property type="evidence" value="ECO:0000250"/>
    <property type="project" value="dictyBase"/>
</dbReference>
<dbReference type="GO" id="GO:0070402">
    <property type="term" value="F:NADPH binding"/>
    <property type="evidence" value="ECO:0000250"/>
    <property type="project" value="dictyBase"/>
</dbReference>
<dbReference type="GO" id="GO:0031152">
    <property type="term" value="P:aggregation involved in sorocarp development"/>
    <property type="evidence" value="ECO:0000315"/>
    <property type="project" value="dictyBase"/>
</dbReference>
<dbReference type="GO" id="GO:0010628">
    <property type="term" value="P:positive regulation of gene expression"/>
    <property type="evidence" value="ECO:0000315"/>
    <property type="project" value="dictyBase"/>
</dbReference>
<dbReference type="GO" id="GO:0030587">
    <property type="term" value="P:sorocarp development"/>
    <property type="evidence" value="ECO:0000315"/>
    <property type="project" value="dictyBase"/>
</dbReference>
<dbReference type="GO" id="GO:0031149">
    <property type="term" value="P:sorocarp stalk cell differentiation"/>
    <property type="evidence" value="ECO:0000315"/>
    <property type="project" value="dictyBase"/>
</dbReference>
<dbReference type="Gene3D" id="3.40.50.720">
    <property type="entry name" value="NAD(P)-binding Rossmann-like Domain"/>
    <property type="match status" value="1"/>
</dbReference>
<dbReference type="Gene3D" id="3.90.25.10">
    <property type="entry name" value="UDP-galactose 4-epimerase, domain 1"/>
    <property type="match status" value="1"/>
</dbReference>
<dbReference type="InterPro" id="IPR051604">
    <property type="entry name" value="Ergot_Alk_Oxidoreductase"/>
</dbReference>
<dbReference type="InterPro" id="IPR016040">
    <property type="entry name" value="NAD(P)-bd_dom"/>
</dbReference>
<dbReference type="InterPro" id="IPR036291">
    <property type="entry name" value="NAD(P)-bd_dom_sf"/>
</dbReference>
<dbReference type="PANTHER" id="PTHR43162">
    <property type="match status" value="1"/>
</dbReference>
<dbReference type="PANTHER" id="PTHR43162:SF1">
    <property type="entry name" value="PRESTALK A DIFFERENTIATION PROTEIN A"/>
    <property type="match status" value="1"/>
</dbReference>
<dbReference type="Pfam" id="PF13460">
    <property type="entry name" value="NAD_binding_10"/>
    <property type="match status" value="1"/>
</dbReference>
<dbReference type="SUPFAM" id="SSF51735">
    <property type="entry name" value="NAD(P)-binding Rossmann-fold domains"/>
    <property type="match status" value="1"/>
</dbReference>
<proteinExistence type="inferred from homology"/>
<organism>
    <name type="scientific">Dictyostelium discoideum</name>
    <name type="common">Social amoeba</name>
    <dbReference type="NCBI Taxonomy" id="44689"/>
    <lineage>
        <taxon>Eukaryota</taxon>
        <taxon>Amoebozoa</taxon>
        <taxon>Evosea</taxon>
        <taxon>Eumycetozoa</taxon>
        <taxon>Dictyostelia</taxon>
        <taxon>Dictyosteliales</taxon>
        <taxon>Dictyosteliaceae</taxon>
        <taxon>Dictyostelium</taxon>
    </lineage>
</organism>
<name>PADA_DICDI</name>
<evidence type="ECO:0000305" key="1"/>
<feature type="chain" id="PRO_0000343638" description="Prestalk A differentiation protein A">
    <location>
        <begin position="1"/>
        <end position="301"/>
    </location>
</feature>
<protein>
    <recommendedName>
        <fullName>Prestalk A differentiation protein A</fullName>
    </recommendedName>
</protein>
<comment type="function">
    <text>Involved in development and cell differentiation.</text>
</comment>
<comment type="similarity">
    <text evidence="1">Belongs to the NmrA-type oxidoreductase family.</text>
</comment>
<keyword id="KW-1185">Reference proteome</keyword>
<gene>
    <name type="primary">padA</name>
    <name type="ORF">DDB_G0286385</name>
</gene>
<sequence>MQTNITSTKMSILVTGGTGVVGRQVVKSLELREKNINIRVGGRDQDKCNQLGFGKNSTFTRFDFMDPTTWDKSLEGVDRVFLIALPMDPTPEKSLGPFIEKCKERKLKKIVVLSVIDAERVPLVKIEQMVQGSGLTFVILRPPFFSENFSEGFMKHDIDQGTIRVPVGEHSVNWISTHDIGECASIVLMDSKFDGRTIEITGPKPINFKELSEVVSKNVGKQIRFEDIKPQEYKKCLMDRGISEPSANYLNELFTSAREDKLSKCTKGVNEITGHDPRSFEQFAKETFSNTSGSCTSKPVI</sequence>
<accession>Q54LW0</accession>
<reference key="1">
    <citation type="journal article" date="2005" name="Nature">
        <title>The genome of the social amoeba Dictyostelium discoideum.</title>
        <authorList>
            <person name="Eichinger L."/>
            <person name="Pachebat J.A."/>
            <person name="Gloeckner G."/>
            <person name="Rajandream M.A."/>
            <person name="Sucgang R."/>
            <person name="Berriman M."/>
            <person name="Song J."/>
            <person name="Olsen R."/>
            <person name="Szafranski K."/>
            <person name="Xu Q."/>
            <person name="Tunggal B."/>
            <person name="Kummerfeld S."/>
            <person name="Madera M."/>
            <person name="Konfortov B.A."/>
            <person name="Rivero F."/>
            <person name="Bankier A.T."/>
            <person name="Lehmann R."/>
            <person name="Hamlin N."/>
            <person name="Davies R."/>
            <person name="Gaudet P."/>
            <person name="Fey P."/>
            <person name="Pilcher K."/>
            <person name="Chen G."/>
            <person name="Saunders D."/>
            <person name="Sodergren E.J."/>
            <person name="Davis P."/>
            <person name="Kerhornou A."/>
            <person name="Nie X."/>
            <person name="Hall N."/>
            <person name="Anjard C."/>
            <person name="Hemphill L."/>
            <person name="Bason N."/>
            <person name="Farbrother P."/>
            <person name="Desany B."/>
            <person name="Just E."/>
            <person name="Morio T."/>
            <person name="Rost R."/>
            <person name="Churcher C.M."/>
            <person name="Cooper J."/>
            <person name="Haydock S."/>
            <person name="van Driessche N."/>
            <person name="Cronin A."/>
            <person name="Goodhead I."/>
            <person name="Muzny D.M."/>
            <person name="Mourier T."/>
            <person name="Pain A."/>
            <person name="Lu M."/>
            <person name="Harper D."/>
            <person name="Lindsay R."/>
            <person name="Hauser H."/>
            <person name="James K.D."/>
            <person name="Quiles M."/>
            <person name="Madan Babu M."/>
            <person name="Saito T."/>
            <person name="Buchrieser C."/>
            <person name="Wardroper A."/>
            <person name="Felder M."/>
            <person name="Thangavelu M."/>
            <person name="Johnson D."/>
            <person name="Knights A."/>
            <person name="Loulseged H."/>
            <person name="Mungall K.L."/>
            <person name="Oliver K."/>
            <person name="Price C."/>
            <person name="Quail M.A."/>
            <person name="Urushihara H."/>
            <person name="Hernandez J."/>
            <person name="Rabbinowitsch E."/>
            <person name="Steffen D."/>
            <person name="Sanders M."/>
            <person name="Ma J."/>
            <person name="Kohara Y."/>
            <person name="Sharp S."/>
            <person name="Simmonds M.N."/>
            <person name="Spiegler S."/>
            <person name="Tivey A."/>
            <person name="Sugano S."/>
            <person name="White B."/>
            <person name="Walker D."/>
            <person name="Woodward J.R."/>
            <person name="Winckler T."/>
            <person name="Tanaka Y."/>
            <person name="Shaulsky G."/>
            <person name="Schleicher M."/>
            <person name="Weinstock G.M."/>
            <person name="Rosenthal A."/>
            <person name="Cox E.C."/>
            <person name="Chisholm R.L."/>
            <person name="Gibbs R.A."/>
            <person name="Loomis W.F."/>
            <person name="Platzer M."/>
            <person name="Kay R.R."/>
            <person name="Williams J.G."/>
            <person name="Dear P.H."/>
            <person name="Noegel A.A."/>
            <person name="Barrell B.G."/>
            <person name="Kuspa A."/>
        </authorList>
    </citation>
    <scope>NUCLEOTIDE SEQUENCE [LARGE SCALE GENOMIC DNA]</scope>
    <source>
        <strain>AX4</strain>
    </source>
</reference>